<proteinExistence type="inferred from homology"/>
<comment type="function">
    <text evidence="1">F(1)F(0) ATP synthase produces ATP from ADP in the presence of a proton or sodium gradient. F-type ATPases consist of two structural domains, F(1) containing the extramembraneous catalytic core and F(0) containing the membrane proton channel, linked together by a central stalk and a peripheral stalk. During catalysis, ATP synthesis in the catalytic domain of F(1) is coupled via a rotary mechanism of the central stalk subunits to proton translocation.</text>
</comment>
<comment type="function">
    <text evidence="1">Key component of the F(0) channel; it plays a direct role in translocation across the membrane. A homomeric c-ring of between 10-14 subunits forms the central stalk rotor element with the F(1) delta and epsilon subunits.</text>
</comment>
<comment type="subunit">
    <text evidence="1">F-type ATPases have 2 components, F(1) - the catalytic core - and F(0) - the membrane proton channel. F(1) has five subunits: alpha(3), beta(3), gamma(1), delta(1), epsilon(1). F(0) has three main subunits: a(1), b(2) and c(10-14). The alpha and beta chains form an alternating ring which encloses part of the gamma chain. F(1) is attached to F(0) by a central stalk formed by the gamma and epsilon chains, while a peripheral stalk is formed by the delta and b chains.</text>
</comment>
<comment type="subcellular location">
    <subcellularLocation>
        <location evidence="1">Cell inner membrane</location>
        <topology evidence="1">Multi-pass membrane protein</topology>
    </subcellularLocation>
</comment>
<comment type="similarity">
    <text evidence="1">Belongs to the ATPase C chain family.</text>
</comment>
<feature type="chain" id="PRO_0000112132" description="ATP synthase subunit c">
    <location>
        <begin position="1"/>
        <end position="100"/>
    </location>
</feature>
<feature type="transmembrane region" description="Helical" evidence="1">
    <location>
        <begin position="30"/>
        <end position="50"/>
    </location>
</feature>
<feature type="transmembrane region" description="Helical" evidence="1">
    <location>
        <begin position="80"/>
        <end position="100"/>
    </location>
</feature>
<feature type="site" description="Reversibly protonated during proton transport" evidence="1">
    <location>
        <position position="83"/>
    </location>
</feature>
<protein>
    <recommendedName>
        <fullName evidence="1">ATP synthase subunit c</fullName>
    </recommendedName>
    <alternativeName>
        <fullName evidence="1">ATP synthase F(0) sector subunit c</fullName>
    </alternativeName>
    <alternativeName>
        <fullName evidence="1">F-type ATPase subunit c</fullName>
        <shortName evidence="1">F-ATPase subunit c</shortName>
    </alternativeName>
    <alternativeName>
        <fullName evidence="1">Lipid-binding protein</fullName>
    </alternativeName>
</protein>
<accession>O66564</accession>
<evidence type="ECO:0000255" key="1">
    <source>
        <dbReference type="HAMAP-Rule" id="MF_01396"/>
    </source>
</evidence>
<sequence>MMKRLMAILTAIMPAIAMAAEGEASVAKGLLYLGAGLAIGLAGLGAGVGMGHAVRGTQEGVARNPNAGGRLQTLMFIGLAFIETIALYGLLIAFILLFVV</sequence>
<dbReference type="EMBL" id="AE000657">
    <property type="protein sequence ID" value="AAC06524.1"/>
    <property type="molecule type" value="Genomic_DNA"/>
</dbReference>
<dbReference type="PIR" id="H70316">
    <property type="entry name" value="H70316"/>
</dbReference>
<dbReference type="RefSeq" id="NP_213124.1">
    <property type="nucleotide sequence ID" value="NC_000918.1"/>
</dbReference>
<dbReference type="SMR" id="O66564"/>
<dbReference type="STRING" id="224324.aq_177"/>
<dbReference type="EnsemblBacteria" id="AAC06524">
    <property type="protein sequence ID" value="AAC06524"/>
    <property type="gene ID" value="aq_177"/>
</dbReference>
<dbReference type="KEGG" id="aae:aq_177"/>
<dbReference type="PATRIC" id="fig|224324.8.peg.154"/>
<dbReference type="eggNOG" id="COG0636">
    <property type="taxonomic scope" value="Bacteria"/>
</dbReference>
<dbReference type="HOGENOM" id="CLU_148047_0_0_0"/>
<dbReference type="InParanoid" id="O66564"/>
<dbReference type="OrthoDB" id="15587at2"/>
<dbReference type="Proteomes" id="UP000000798">
    <property type="component" value="Chromosome"/>
</dbReference>
<dbReference type="GO" id="GO:0005886">
    <property type="term" value="C:plasma membrane"/>
    <property type="evidence" value="ECO:0007669"/>
    <property type="project" value="UniProtKB-SubCell"/>
</dbReference>
<dbReference type="GO" id="GO:0045259">
    <property type="term" value="C:proton-transporting ATP synthase complex"/>
    <property type="evidence" value="ECO:0007669"/>
    <property type="project" value="UniProtKB-KW"/>
</dbReference>
<dbReference type="GO" id="GO:0033177">
    <property type="term" value="C:proton-transporting two-sector ATPase complex, proton-transporting domain"/>
    <property type="evidence" value="ECO:0007669"/>
    <property type="project" value="InterPro"/>
</dbReference>
<dbReference type="GO" id="GO:0008289">
    <property type="term" value="F:lipid binding"/>
    <property type="evidence" value="ECO:0007669"/>
    <property type="project" value="UniProtKB-KW"/>
</dbReference>
<dbReference type="GO" id="GO:0046933">
    <property type="term" value="F:proton-transporting ATP synthase activity, rotational mechanism"/>
    <property type="evidence" value="ECO:0007669"/>
    <property type="project" value="UniProtKB-UniRule"/>
</dbReference>
<dbReference type="GO" id="GO:0015986">
    <property type="term" value="P:proton motive force-driven ATP synthesis"/>
    <property type="evidence" value="ECO:0000318"/>
    <property type="project" value="GO_Central"/>
</dbReference>
<dbReference type="CDD" id="cd18121">
    <property type="entry name" value="ATP-synt_Fo_c"/>
    <property type="match status" value="1"/>
</dbReference>
<dbReference type="FunFam" id="1.20.20.10:FF:000004">
    <property type="entry name" value="ATP synthase subunit c"/>
    <property type="match status" value="1"/>
</dbReference>
<dbReference type="Gene3D" id="1.20.20.10">
    <property type="entry name" value="F1F0 ATP synthase subunit C"/>
    <property type="match status" value="1"/>
</dbReference>
<dbReference type="HAMAP" id="MF_01396">
    <property type="entry name" value="ATP_synth_c_bact"/>
    <property type="match status" value="1"/>
</dbReference>
<dbReference type="InterPro" id="IPR005953">
    <property type="entry name" value="ATP_synth_csu_bac/chlpt"/>
</dbReference>
<dbReference type="InterPro" id="IPR000454">
    <property type="entry name" value="ATP_synth_F0_csu"/>
</dbReference>
<dbReference type="InterPro" id="IPR020537">
    <property type="entry name" value="ATP_synth_F0_csu_DDCD_BS"/>
</dbReference>
<dbReference type="InterPro" id="IPR038662">
    <property type="entry name" value="ATP_synth_F0_csu_sf"/>
</dbReference>
<dbReference type="InterPro" id="IPR002379">
    <property type="entry name" value="ATPase_proteolipid_c-like_dom"/>
</dbReference>
<dbReference type="InterPro" id="IPR035921">
    <property type="entry name" value="F/V-ATP_Csub_sf"/>
</dbReference>
<dbReference type="NCBIfam" id="TIGR01260">
    <property type="entry name" value="ATP_synt_c"/>
    <property type="match status" value="1"/>
</dbReference>
<dbReference type="PANTHER" id="PTHR10031">
    <property type="entry name" value="ATP SYNTHASE LIPID-BINDING PROTEIN, MITOCHONDRIAL"/>
    <property type="match status" value="1"/>
</dbReference>
<dbReference type="PANTHER" id="PTHR10031:SF0">
    <property type="entry name" value="ATPASE PROTEIN 9"/>
    <property type="match status" value="1"/>
</dbReference>
<dbReference type="Pfam" id="PF00137">
    <property type="entry name" value="ATP-synt_C"/>
    <property type="match status" value="1"/>
</dbReference>
<dbReference type="PRINTS" id="PR00124">
    <property type="entry name" value="ATPASEC"/>
</dbReference>
<dbReference type="SUPFAM" id="SSF81333">
    <property type="entry name" value="F1F0 ATP synthase subunit C"/>
    <property type="match status" value="1"/>
</dbReference>
<dbReference type="PROSITE" id="PS00605">
    <property type="entry name" value="ATPASE_C"/>
    <property type="match status" value="1"/>
</dbReference>
<reference key="1">
    <citation type="journal article" date="1998" name="Nature">
        <title>The complete genome of the hyperthermophilic bacterium Aquifex aeolicus.</title>
        <authorList>
            <person name="Deckert G."/>
            <person name="Warren P.V."/>
            <person name="Gaasterland T."/>
            <person name="Young W.G."/>
            <person name="Lenox A.L."/>
            <person name="Graham D.E."/>
            <person name="Overbeek R."/>
            <person name="Snead M.A."/>
            <person name="Keller M."/>
            <person name="Aujay M."/>
            <person name="Huber R."/>
            <person name="Feldman R.A."/>
            <person name="Short J.M."/>
            <person name="Olsen G.J."/>
            <person name="Swanson R.V."/>
        </authorList>
    </citation>
    <scope>NUCLEOTIDE SEQUENCE [LARGE SCALE GENOMIC DNA]</scope>
    <source>
        <strain>VF5</strain>
    </source>
</reference>
<gene>
    <name evidence="1" type="primary">atpE</name>
    <name type="ordered locus">aq_177</name>
</gene>
<keyword id="KW-0066">ATP synthesis</keyword>
<keyword id="KW-0997">Cell inner membrane</keyword>
<keyword id="KW-1003">Cell membrane</keyword>
<keyword id="KW-0138">CF(0)</keyword>
<keyword id="KW-0375">Hydrogen ion transport</keyword>
<keyword id="KW-0406">Ion transport</keyword>
<keyword id="KW-0446">Lipid-binding</keyword>
<keyword id="KW-0472">Membrane</keyword>
<keyword id="KW-1185">Reference proteome</keyword>
<keyword id="KW-0812">Transmembrane</keyword>
<keyword id="KW-1133">Transmembrane helix</keyword>
<keyword id="KW-0813">Transport</keyword>
<name>ATPL_AQUAE</name>
<organism>
    <name type="scientific">Aquifex aeolicus (strain VF5)</name>
    <dbReference type="NCBI Taxonomy" id="224324"/>
    <lineage>
        <taxon>Bacteria</taxon>
        <taxon>Pseudomonadati</taxon>
        <taxon>Aquificota</taxon>
        <taxon>Aquificia</taxon>
        <taxon>Aquificales</taxon>
        <taxon>Aquificaceae</taxon>
        <taxon>Aquifex</taxon>
    </lineage>
</organism>